<protein>
    <recommendedName>
        <fullName evidence="1">Bifunctional glutamine synthetase adenylyltransferase/adenylyl-removing enzyme</fullName>
    </recommendedName>
    <alternativeName>
        <fullName evidence="1">ATP:glutamine synthetase adenylyltransferase</fullName>
    </alternativeName>
    <alternativeName>
        <fullName evidence="1">ATase</fullName>
    </alternativeName>
    <domain>
        <recommendedName>
            <fullName evidence="1">Glutamine synthetase adenylyl-L-tyrosine phosphorylase</fullName>
            <ecNumber evidence="1">2.7.7.89</ecNumber>
        </recommendedName>
        <alternativeName>
            <fullName evidence="1">Adenylyl removase</fullName>
            <shortName evidence="1">AR</shortName>
            <shortName evidence="1">AT-N</shortName>
        </alternativeName>
    </domain>
    <domain>
        <recommendedName>
            <fullName evidence="1">Glutamine synthetase adenylyl transferase</fullName>
            <ecNumber evidence="1">2.7.7.42</ecNumber>
        </recommendedName>
        <alternativeName>
            <fullName evidence="1">Adenylyl transferase</fullName>
            <shortName evidence="1">AT</shortName>
            <shortName evidence="1">AT-C</shortName>
        </alternativeName>
    </domain>
</protein>
<evidence type="ECO:0000255" key="1">
    <source>
        <dbReference type="HAMAP-Rule" id="MF_00802"/>
    </source>
</evidence>
<dbReference type="EC" id="2.7.7.89" evidence="1"/>
<dbReference type="EC" id="2.7.7.42" evidence="1"/>
<dbReference type="EMBL" id="CP000970">
    <property type="protein sequence ID" value="ACB16762.1"/>
    <property type="molecule type" value="Genomic_DNA"/>
</dbReference>
<dbReference type="RefSeq" id="WP_012311684.1">
    <property type="nucleotide sequence ID" value="NC_010498.1"/>
</dbReference>
<dbReference type="SMR" id="B1LF44"/>
<dbReference type="KEGG" id="ecm:EcSMS35_3345"/>
<dbReference type="HOGENOM" id="CLU_006233_0_1_6"/>
<dbReference type="Proteomes" id="UP000007011">
    <property type="component" value="Chromosome"/>
</dbReference>
<dbReference type="GO" id="GO:0005829">
    <property type="term" value="C:cytosol"/>
    <property type="evidence" value="ECO:0007669"/>
    <property type="project" value="TreeGrafter"/>
</dbReference>
<dbReference type="GO" id="GO:0008882">
    <property type="term" value="F:[glutamate-ammonia-ligase] adenylyltransferase activity"/>
    <property type="evidence" value="ECO:0007669"/>
    <property type="project" value="UniProtKB-UniRule"/>
</dbReference>
<dbReference type="GO" id="GO:0047388">
    <property type="term" value="F:[glutamine synthetase]-adenylyl-L-tyrosine phosphorylase activity"/>
    <property type="evidence" value="ECO:0007669"/>
    <property type="project" value="UniProtKB-EC"/>
</dbReference>
<dbReference type="GO" id="GO:0005524">
    <property type="term" value="F:ATP binding"/>
    <property type="evidence" value="ECO:0007669"/>
    <property type="project" value="UniProtKB-UniRule"/>
</dbReference>
<dbReference type="GO" id="GO:0000287">
    <property type="term" value="F:magnesium ion binding"/>
    <property type="evidence" value="ECO:0007669"/>
    <property type="project" value="UniProtKB-UniRule"/>
</dbReference>
<dbReference type="GO" id="GO:0000820">
    <property type="term" value="P:regulation of glutamine family amino acid metabolic process"/>
    <property type="evidence" value="ECO:0007669"/>
    <property type="project" value="UniProtKB-UniRule"/>
</dbReference>
<dbReference type="CDD" id="cd05401">
    <property type="entry name" value="NT_GlnE_GlnD_like"/>
    <property type="match status" value="2"/>
</dbReference>
<dbReference type="FunFam" id="1.10.4050.10:FF:000001">
    <property type="entry name" value="Bifunctional glutamine synthetase adenylyltransferase/adenylyl-removing enzyme"/>
    <property type="match status" value="1"/>
</dbReference>
<dbReference type="FunFam" id="1.20.120.1510:FF:000001">
    <property type="entry name" value="Bifunctional glutamine synthetase adenylyltransferase/adenylyl-removing enzyme"/>
    <property type="match status" value="1"/>
</dbReference>
<dbReference type="FunFam" id="1.20.120.330:FF:000005">
    <property type="entry name" value="Bifunctional glutamine synthetase adenylyltransferase/adenylyl-removing enzyme"/>
    <property type="match status" value="1"/>
</dbReference>
<dbReference type="FunFam" id="1.20.120.330:FF:000008">
    <property type="entry name" value="Bifunctional glutamine synthetase adenylyltransferase/adenylyl-removing enzyme"/>
    <property type="match status" value="1"/>
</dbReference>
<dbReference type="FunFam" id="3.30.460.10:FF:000009">
    <property type="entry name" value="Bifunctional glutamine synthetase adenylyltransferase/adenylyl-removing enzyme"/>
    <property type="match status" value="1"/>
</dbReference>
<dbReference type="FunFam" id="3.30.460.10:FF:000014">
    <property type="entry name" value="Bifunctional glutamine synthetase adenylyltransferase/adenylyl-removing enzyme"/>
    <property type="match status" value="1"/>
</dbReference>
<dbReference type="Gene3D" id="1.20.120.1510">
    <property type="match status" value="1"/>
</dbReference>
<dbReference type="Gene3D" id="3.30.460.10">
    <property type="entry name" value="Beta Polymerase, domain 2"/>
    <property type="match status" value="2"/>
</dbReference>
<dbReference type="Gene3D" id="1.10.4050.10">
    <property type="entry name" value="Glutamine synthase adenylyltransferase GlnE"/>
    <property type="match status" value="1"/>
</dbReference>
<dbReference type="Gene3D" id="1.20.120.330">
    <property type="entry name" value="Nucleotidyltransferases domain 2"/>
    <property type="match status" value="2"/>
</dbReference>
<dbReference type="HAMAP" id="MF_00802">
    <property type="entry name" value="GlnE"/>
    <property type="match status" value="1"/>
</dbReference>
<dbReference type="InterPro" id="IPR023057">
    <property type="entry name" value="GlnE"/>
</dbReference>
<dbReference type="InterPro" id="IPR005190">
    <property type="entry name" value="GlnE_rpt_dom"/>
</dbReference>
<dbReference type="InterPro" id="IPR043519">
    <property type="entry name" value="NT_sf"/>
</dbReference>
<dbReference type="InterPro" id="IPR013546">
    <property type="entry name" value="PII_UdlTrfase/GS_AdlTrfase"/>
</dbReference>
<dbReference type="NCBIfam" id="NF008292">
    <property type="entry name" value="PRK11072.1"/>
    <property type="match status" value="1"/>
</dbReference>
<dbReference type="PANTHER" id="PTHR30621:SF0">
    <property type="entry name" value="BIFUNCTIONAL GLUTAMINE SYNTHETASE ADENYLYLTRANSFERASE_ADENYLYL-REMOVING ENZYME"/>
    <property type="match status" value="1"/>
</dbReference>
<dbReference type="PANTHER" id="PTHR30621">
    <property type="entry name" value="GLUTAMINE SYNTHETASE ADENYLYLTRANSFERASE"/>
    <property type="match status" value="1"/>
</dbReference>
<dbReference type="Pfam" id="PF08335">
    <property type="entry name" value="GlnD_UR_UTase"/>
    <property type="match status" value="2"/>
</dbReference>
<dbReference type="Pfam" id="PF03710">
    <property type="entry name" value="GlnE"/>
    <property type="match status" value="2"/>
</dbReference>
<dbReference type="SUPFAM" id="SSF81301">
    <property type="entry name" value="Nucleotidyltransferase"/>
    <property type="match status" value="2"/>
</dbReference>
<dbReference type="SUPFAM" id="SSF81593">
    <property type="entry name" value="Nucleotidyltransferase substrate binding subunit/domain"/>
    <property type="match status" value="2"/>
</dbReference>
<gene>
    <name evidence="1" type="primary">glnE</name>
    <name type="ordered locus">EcSMS35_3345</name>
</gene>
<proteinExistence type="inferred from homology"/>
<feature type="chain" id="PRO_1000133904" description="Bifunctional glutamine synthetase adenylyltransferase/adenylyl-removing enzyme">
    <location>
        <begin position="1"/>
        <end position="946"/>
    </location>
</feature>
<feature type="region of interest" description="Adenylyl removase" evidence="1">
    <location>
        <begin position="1"/>
        <end position="440"/>
    </location>
</feature>
<feature type="region of interest" description="Adenylyl transferase" evidence="1">
    <location>
        <begin position="449"/>
        <end position="946"/>
    </location>
</feature>
<reference key="1">
    <citation type="journal article" date="2008" name="J. Bacteriol.">
        <title>Insights into the environmental resistance gene pool from the genome sequence of the multidrug-resistant environmental isolate Escherichia coli SMS-3-5.</title>
        <authorList>
            <person name="Fricke W.F."/>
            <person name="Wright M.S."/>
            <person name="Lindell A.H."/>
            <person name="Harkins D.M."/>
            <person name="Baker-Austin C."/>
            <person name="Ravel J."/>
            <person name="Stepanauskas R."/>
        </authorList>
    </citation>
    <scope>NUCLEOTIDE SEQUENCE [LARGE SCALE GENOMIC DNA]</scope>
    <source>
        <strain>SMS-3-5 / SECEC</strain>
    </source>
</reference>
<comment type="function">
    <text evidence="1">Involved in the regulation of glutamine synthetase GlnA, a key enzyme in the process to assimilate ammonia. When cellular nitrogen levels are high, the C-terminal adenylyl transferase (AT) inactivates GlnA by covalent transfer of an adenylyl group from ATP to specific tyrosine residue of GlnA, thus reducing its activity. Conversely, when nitrogen levels are low, the N-terminal adenylyl removase (AR) activates GlnA by removing the adenylyl group by phosphorolysis, increasing its activity. The regulatory region of GlnE binds the signal transduction protein PII (GlnB) which indicates the nitrogen status of the cell.</text>
</comment>
<comment type="catalytic activity">
    <reaction evidence="1">
        <text>[glutamine synthetase]-O(4)-(5'-adenylyl)-L-tyrosine + phosphate = [glutamine synthetase]-L-tyrosine + ADP</text>
        <dbReference type="Rhea" id="RHEA:43716"/>
        <dbReference type="Rhea" id="RHEA-COMP:10660"/>
        <dbReference type="Rhea" id="RHEA-COMP:10661"/>
        <dbReference type="ChEBI" id="CHEBI:43474"/>
        <dbReference type="ChEBI" id="CHEBI:46858"/>
        <dbReference type="ChEBI" id="CHEBI:83624"/>
        <dbReference type="ChEBI" id="CHEBI:456216"/>
        <dbReference type="EC" id="2.7.7.89"/>
    </reaction>
</comment>
<comment type="catalytic activity">
    <reaction evidence="1">
        <text>[glutamine synthetase]-L-tyrosine + ATP = [glutamine synthetase]-O(4)-(5'-adenylyl)-L-tyrosine + diphosphate</text>
        <dbReference type="Rhea" id="RHEA:18589"/>
        <dbReference type="Rhea" id="RHEA-COMP:10660"/>
        <dbReference type="Rhea" id="RHEA-COMP:10661"/>
        <dbReference type="ChEBI" id="CHEBI:30616"/>
        <dbReference type="ChEBI" id="CHEBI:33019"/>
        <dbReference type="ChEBI" id="CHEBI:46858"/>
        <dbReference type="ChEBI" id="CHEBI:83624"/>
        <dbReference type="EC" id="2.7.7.42"/>
    </reaction>
</comment>
<comment type="cofactor">
    <cofactor evidence="1">
        <name>Mg(2+)</name>
        <dbReference type="ChEBI" id="CHEBI:18420"/>
    </cofactor>
</comment>
<comment type="similarity">
    <text evidence="1">Belongs to the GlnE family.</text>
</comment>
<keyword id="KW-0067">ATP-binding</keyword>
<keyword id="KW-0460">Magnesium</keyword>
<keyword id="KW-0511">Multifunctional enzyme</keyword>
<keyword id="KW-0547">Nucleotide-binding</keyword>
<keyword id="KW-0548">Nucleotidyltransferase</keyword>
<keyword id="KW-0808">Transferase</keyword>
<sequence>MKPLSSPLQQYWQTVVERLPEPLADESLSAQAKSVLTFSDFVQDSVIAHPEWLTELESQPPQADEWQHYSAWWQEALSNVSDEAGLMRELRLFRRRIMVRIAWAQTLALVTEESILLQLSHLAETLIVAARDWLYDACCREWGTPCNAQGEAQPLLILGMGKLGGGELNFSSDIDLIFAWPEHGCTQGGRRELDNAQFFTRMGQRLIKVLDQPTQDGFVYRVDMRLRPFGESGPLVLSFAALEDYYQEQGRDWERYAMVKARIMGDSEGVYANELRAMLRPFVFRRYIDFSVIQSLRNMKGMIAREVRRRGLTDNIKLGAGGIREIEFIVQVFQLIRGGREPSLQSRSLLPTLSAIAELHLLSENDAEQLRVAYLFLRRLENLLQSINDEQTQTLPSDELNRARLAWAMDFADWQQLTGALIGHMTNVRRVFNELIGDDESETQEESLSEQWRELWQDALQEDDTTPVLAHLSEDDRKQVLTLIADFRKELDKRTIGPRGRQVLDHLMPHLLRDVCTREDAAVTLSRITALLVGIVTRTTYLELLSEFPAALKHLISLCAASPMIASQLARYPLLLDELLDPNTLYQPTATDAYRDELRQYLLRVPEDDEEQQLEALRQFKQAQLLRIAAADIAGTLPVMKVSDHLTWLAEAMIDAVVQQAWVQMVARYGKPNHLNEREGRGFAVVGYGKLGGWELGYSSDLDLIFLHDCPMDAMTDGEREIDGRQFYLRLAQRIMHLFSTRTSSGILYEVDARLRPSGAAGMLVTSAEAFADYQKNEAWTWEHQALVRARVVYGDPQLTAHFDAVRREIMTLPREGKTLQTEVREMREKMRAHLGNKHRDRFDIKADEGGITDIEFITQYLVLRYAHEKPKLTRWSDNVRILELLAQNDIMEEQEAMALTRAYTTLRDELHHLALQELPGHVPEDCFTAEREQVRVSWQKWLVEE</sequence>
<accession>B1LF44</accession>
<organism>
    <name type="scientific">Escherichia coli (strain SMS-3-5 / SECEC)</name>
    <dbReference type="NCBI Taxonomy" id="439855"/>
    <lineage>
        <taxon>Bacteria</taxon>
        <taxon>Pseudomonadati</taxon>
        <taxon>Pseudomonadota</taxon>
        <taxon>Gammaproteobacteria</taxon>
        <taxon>Enterobacterales</taxon>
        <taxon>Enterobacteriaceae</taxon>
        <taxon>Escherichia</taxon>
    </lineage>
</organism>
<name>GLNE_ECOSM</name>